<evidence type="ECO:0000255" key="1">
    <source>
        <dbReference type="HAMAP-Rule" id="MF_01152"/>
    </source>
</evidence>
<comment type="function">
    <text evidence="1">Participates actively in the response to hyperosmotic and heat shock by preventing the aggregation of stress-denatured proteins and by disaggregating proteins, also in an autonomous, DnaK-independent fashion. Unfolded proteins bind initially to DnaJ; upon interaction with the DnaJ-bound protein, DnaK hydrolyzes its bound ATP, resulting in the formation of a stable complex. GrpE releases ADP from DnaK; ATP binding to DnaK triggers the release of the substrate protein, thus completing the reaction cycle. Several rounds of ATP-dependent interactions between DnaJ, DnaK and GrpE are required for fully efficient folding. Also involved, together with DnaK and GrpE, in the DNA replication of plasmids through activation of initiation proteins.</text>
</comment>
<comment type="cofactor">
    <cofactor evidence="1">
        <name>Zn(2+)</name>
        <dbReference type="ChEBI" id="CHEBI:29105"/>
    </cofactor>
    <text evidence="1">Binds 2 Zn(2+) ions per monomer.</text>
</comment>
<comment type="subunit">
    <text evidence="1">Homodimer.</text>
</comment>
<comment type="subcellular location">
    <subcellularLocation>
        <location evidence="1">Cytoplasm</location>
    </subcellularLocation>
</comment>
<comment type="domain">
    <text evidence="1">The J domain is necessary and sufficient to stimulate DnaK ATPase activity. Zinc center 1 plays an important role in the autonomous, DnaK-independent chaperone activity of DnaJ. Zinc center 2 is essential for interaction with DnaK and for DnaJ activity.</text>
</comment>
<comment type="similarity">
    <text evidence="1">Belongs to the DnaJ family.</text>
</comment>
<accession>Q31HA6</accession>
<keyword id="KW-0143">Chaperone</keyword>
<keyword id="KW-0963">Cytoplasm</keyword>
<keyword id="KW-0235">DNA replication</keyword>
<keyword id="KW-0479">Metal-binding</keyword>
<keyword id="KW-0677">Repeat</keyword>
<keyword id="KW-0346">Stress response</keyword>
<keyword id="KW-0862">Zinc</keyword>
<keyword id="KW-0863">Zinc-finger</keyword>
<name>DNAJ_HYDCU</name>
<protein>
    <recommendedName>
        <fullName evidence="1">Chaperone protein DnaJ</fullName>
    </recommendedName>
</protein>
<proteinExistence type="inferred from homology"/>
<organism>
    <name type="scientific">Hydrogenovibrio crunogenus (strain DSM 25203 / XCL-2)</name>
    <name type="common">Thiomicrospira crunogena</name>
    <dbReference type="NCBI Taxonomy" id="317025"/>
    <lineage>
        <taxon>Bacteria</taxon>
        <taxon>Pseudomonadati</taxon>
        <taxon>Pseudomonadota</taxon>
        <taxon>Gammaproteobacteria</taxon>
        <taxon>Thiotrichales</taxon>
        <taxon>Piscirickettsiaceae</taxon>
        <taxon>Hydrogenovibrio</taxon>
    </lineage>
</organism>
<feature type="chain" id="PRO_1000085323" description="Chaperone protein DnaJ">
    <location>
        <begin position="1"/>
        <end position="387"/>
    </location>
</feature>
<feature type="domain" description="J" evidence="1">
    <location>
        <begin position="5"/>
        <end position="70"/>
    </location>
</feature>
<feature type="repeat" description="CXXCXGXG motif">
    <location>
        <begin position="143"/>
        <end position="150"/>
    </location>
</feature>
<feature type="repeat" description="CXXCXGXG motif">
    <location>
        <begin position="160"/>
        <end position="167"/>
    </location>
</feature>
<feature type="repeat" description="CXXCXGXG motif">
    <location>
        <begin position="182"/>
        <end position="189"/>
    </location>
</feature>
<feature type="repeat" description="CXXCXGXG motif">
    <location>
        <begin position="196"/>
        <end position="203"/>
    </location>
</feature>
<feature type="zinc finger region" description="CR-type" evidence="1">
    <location>
        <begin position="130"/>
        <end position="208"/>
    </location>
</feature>
<feature type="binding site" evidence="1">
    <location>
        <position position="143"/>
    </location>
    <ligand>
        <name>Zn(2+)</name>
        <dbReference type="ChEBI" id="CHEBI:29105"/>
        <label>1</label>
    </ligand>
</feature>
<feature type="binding site" evidence="1">
    <location>
        <position position="146"/>
    </location>
    <ligand>
        <name>Zn(2+)</name>
        <dbReference type="ChEBI" id="CHEBI:29105"/>
        <label>1</label>
    </ligand>
</feature>
<feature type="binding site" evidence="1">
    <location>
        <position position="160"/>
    </location>
    <ligand>
        <name>Zn(2+)</name>
        <dbReference type="ChEBI" id="CHEBI:29105"/>
        <label>2</label>
    </ligand>
</feature>
<feature type="binding site" evidence="1">
    <location>
        <position position="163"/>
    </location>
    <ligand>
        <name>Zn(2+)</name>
        <dbReference type="ChEBI" id="CHEBI:29105"/>
        <label>2</label>
    </ligand>
</feature>
<feature type="binding site" evidence="1">
    <location>
        <position position="182"/>
    </location>
    <ligand>
        <name>Zn(2+)</name>
        <dbReference type="ChEBI" id="CHEBI:29105"/>
        <label>2</label>
    </ligand>
</feature>
<feature type="binding site" evidence="1">
    <location>
        <position position="185"/>
    </location>
    <ligand>
        <name>Zn(2+)</name>
        <dbReference type="ChEBI" id="CHEBI:29105"/>
        <label>2</label>
    </ligand>
</feature>
<feature type="binding site" evidence="1">
    <location>
        <position position="196"/>
    </location>
    <ligand>
        <name>Zn(2+)</name>
        <dbReference type="ChEBI" id="CHEBI:29105"/>
        <label>1</label>
    </ligand>
</feature>
<feature type="binding site" evidence="1">
    <location>
        <position position="199"/>
    </location>
    <ligand>
        <name>Zn(2+)</name>
        <dbReference type="ChEBI" id="CHEBI:29105"/>
        <label>1</label>
    </ligand>
</feature>
<dbReference type="EMBL" id="CP000109">
    <property type="protein sequence ID" value="ABB41467.1"/>
    <property type="molecule type" value="Genomic_DNA"/>
</dbReference>
<dbReference type="SMR" id="Q31HA6"/>
<dbReference type="STRING" id="317025.Tcr_0871"/>
<dbReference type="KEGG" id="tcx:Tcr_0871"/>
<dbReference type="eggNOG" id="COG0484">
    <property type="taxonomic scope" value="Bacteria"/>
</dbReference>
<dbReference type="HOGENOM" id="CLU_017633_0_7_6"/>
<dbReference type="OrthoDB" id="9779889at2"/>
<dbReference type="GO" id="GO:0005737">
    <property type="term" value="C:cytoplasm"/>
    <property type="evidence" value="ECO:0007669"/>
    <property type="project" value="UniProtKB-SubCell"/>
</dbReference>
<dbReference type="GO" id="GO:0005524">
    <property type="term" value="F:ATP binding"/>
    <property type="evidence" value="ECO:0007669"/>
    <property type="project" value="InterPro"/>
</dbReference>
<dbReference type="GO" id="GO:0031072">
    <property type="term" value="F:heat shock protein binding"/>
    <property type="evidence" value="ECO:0007669"/>
    <property type="project" value="InterPro"/>
</dbReference>
<dbReference type="GO" id="GO:0051082">
    <property type="term" value="F:unfolded protein binding"/>
    <property type="evidence" value="ECO:0007669"/>
    <property type="project" value="UniProtKB-UniRule"/>
</dbReference>
<dbReference type="GO" id="GO:0008270">
    <property type="term" value="F:zinc ion binding"/>
    <property type="evidence" value="ECO:0007669"/>
    <property type="project" value="UniProtKB-UniRule"/>
</dbReference>
<dbReference type="GO" id="GO:0051085">
    <property type="term" value="P:chaperone cofactor-dependent protein refolding"/>
    <property type="evidence" value="ECO:0007669"/>
    <property type="project" value="TreeGrafter"/>
</dbReference>
<dbReference type="GO" id="GO:0006260">
    <property type="term" value="P:DNA replication"/>
    <property type="evidence" value="ECO:0007669"/>
    <property type="project" value="UniProtKB-KW"/>
</dbReference>
<dbReference type="GO" id="GO:0042026">
    <property type="term" value="P:protein refolding"/>
    <property type="evidence" value="ECO:0007669"/>
    <property type="project" value="TreeGrafter"/>
</dbReference>
<dbReference type="GO" id="GO:0009408">
    <property type="term" value="P:response to heat"/>
    <property type="evidence" value="ECO:0007669"/>
    <property type="project" value="InterPro"/>
</dbReference>
<dbReference type="CDD" id="cd06257">
    <property type="entry name" value="DnaJ"/>
    <property type="match status" value="1"/>
</dbReference>
<dbReference type="CDD" id="cd10747">
    <property type="entry name" value="DnaJ_C"/>
    <property type="match status" value="1"/>
</dbReference>
<dbReference type="FunFam" id="1.10.287.110:FF:000034">
    <property type="entry name" value="Chaperone protein DnaJ"/>
    <property type="match status" value="1"/>
</dbReference>
<dbReference type="FunFam" id="2.10.230.10:FF:000002">
    <property type="entry name" value="Molecular chaperone DnaJ"/>
    <property type="match status" value="1"/>
</dbReference>
<dbReference type="FunFam" id="2.60.260.20:FF:000004">
    <property type="entry name" value="Molecular chaperone DnaJ"/>
    <property type="match status" value="1"/>
</dbReference>
<dbReference type="Gene3D" id="1.10.287.110">
    <property type="entry name" value="DnaJ domain"/>
    <property type="match status" value="1"/>
</dbReference>
<dbReference type="Gene3D" id="2.10.230.10">
    <property type="entry name" value="Heat shock protein DnaJ, cysteine-rich domain"/>
    <property type="match status" value="1"/>
</dbReference>
<dbReference type="Gene3D" id="2.60.260.20">
    <property type="entry name" value="Urease metallochaperone UreE, N-terminal domain"/>
    <property type="match status" value="2"/>
</dbReference>
<dbReference type="HAMAP" id="MF_01152">
    <property type="entry name" value="DnaJ"/>
    <property type="match status" value="1"/>
</dbReference>
<dbReference type="InterPro" id="IPR012724">
    <property type="entry name" value="DnaJ"/>
</dbReference>
<dbReference type="InterPro" id="IPR002939">
    <property type="entry name" value="DnaJ_C"/>
</dbReference>
<dbReference type="InterPro" id="IPR001623">
    <property type="entry name" value="DnaJ_domain"/>
</dbReference>
<dbReference type="InterPro" id="IPR018253">
    <property type="entry name" value="DnaJ_domain_CS"/>
</dbReference>
<dbReference type="InterPro" id="IPR008971">
    <property type="entry name" value="HSP40/DnaJ_pept-bd"/>
</dbReference>
<dbReference type="InterPro" id="IPR001305">
    <property type="entry name" value="HSP_DnaJ_Cys-rich_dom"/>
</dbReference>
<dbReference type="InterPro" id="IPR036410">
    <property type="entry name" value="HSP_DnaJ_Cys-rich_dom_sf"/>
</dbReference>
<dbReference type="InterPro" id="IPR036869">
    <property type="entry name" value="J_dom_sf"/>
</dbReference>
<dbReference type="NCBIfam" id="TIGR02349">
    <property type="entry name" value="DnaJ_bact"/>
    <property type="match status" value="1"/>
</dbReference>
<dbReference type="NCBIfam" id="NF008035">
    <property type="entry name" value="PRK10767.1"/>
    <property type="match status" value="1"/>
</dbReference>
<dbReference type="PANTHER" id="PTHR43096:SF48">
    <property type="entry name" value="CHAPERONE PROTEIN DNAJ"/>
    <property type="match status" value="1"/>
</dbReference>
<dbReference type="PANTHER" id="PTHR43096">
    <property type="entry name" value="DNAJ HOMOLOG 1, MITOCHONDRIAL-RELATED"/>
    <property type="match status" value="1"/>
</dbReference>
<dbReference type="Pfam" id="PF00226">
    <property type="entry name" value="DnaJ"/>
    <property type="match status" value="1"/>
</dbReference>
<dbReference type="Pfam" id="PF01556">
    <property type="entry name" value="DnaJ_C"/>
    <property type="match status" value="1"/>
</dbReference>
<dbReference type="Pfam" id="PF00684">
    <property type="entry name" value="DnaJ_CXXCXGXG"/>
    <property type="match status" value="1"/>
</dbReference>
<dbReference type="PRINTS" id="PR00625">
    <property type="entry name" value="JDOMAIN"/>
</dbReference>
<dbReference type="SMART" id="SM00271">
    <property type="entry name" value="DnaJ"/>
    <property type="match status" value="1"/>
</dbReference>
<dbReference type="SUPFAM" id="SSF46565">
    <property type="entry name" value="Chaperone J-domain"/>
    <property type="match status" value="1"/>
</dbReference>
<dbReference type="SUPFAM" id="SSF57938">
    <property type="entry name" value="DnaJ/Hsp40 cysteine-rich domain"/>
    <property type="match status" value="1"/>
</dbReference>
<dbReference type="SUPFAM" id="SSF49493">
    <property type="entry name" value="HSP40/DnaJ peptide-binding domain"/>
    <property type="match status" value="2"/>
</dbReference>
<dbReference type="PROSITE" id="PS00636">
    <property type="entry name" value="DNAJ_1"/>
    <property type="match status" value="1"/>
</dbReference>
<dbReference type="PROSITE" id="PS50076">
    <property type="entry name" value="DNAJ_2"/>
    <property type="match status" value="1"/>
</dbReference>
<dbReference type="PROSITE" id="PS51188">
    <property type="entry name" value="ZF_CR"/>
    <property type="match status" value="1"/>
</dbReference>
<sequence>MSKRDYYEILEVSATASEGEIKKAYRKLAMRYHPDRNPDDEEAEDKFKEASEAYEVLSDAQKRQAYDQFGHAGVDGSAGQGGFGGGGFADFGDIFGDIFGGGFGGGHRGPQPGSDLQYELEVSLEDAVAGTTVDVRIPTKELCESCDGSGAEPGSDVQTCPTCQGIGQVRVQQGFFAVSRTCPNCHGTGKLVKTPCKTCRGEGYKHSSKTLSVKIPAGVDNGDRIRLQGEGEAGEPGAPHGDLYVRIRVKEHKIFQRDGNTLFCDMPLSFATATLGGTMDVPTLNGKANLKIPAGTQSGQRFKLAGKGVKSVRSSHVGDMIVEVHIETPVKLTSEQKELLKAFDESLQGKHHKQHSPKTHSFFDSVKAFFKGDDEDGGNDKKDGPWN</sequence>
<reference key="1">
    <citation type="journal article" date="2006" name="PLoS Biol.">
        <title>The genome of deep-sea vent chemolithoautotroph Thiomicrospira crunogena XCL-2.</title>
        <authorList>
            <person name="Scott K.M."/>
            <person name="Sievert S.M."/>
            <person name="Abril F.N."/>
            <person name="Ball L.A."/>
            <person name="Barrett C.J."/>
            <person name="Blake R.A."/>
            <person name="Boller A.J."/>
            <person name="Chain P.S.G."/>
            <person name="Clark J.A."/>
            <person name="Davis C.R."/>
            <person name="Detter C."/>
            <person name="Do K.F."/>
            <person name="Dobrinski K.P."/>
            <person name="Faza B.I."/>
            <person name="Fitzpatrick K.A."/>
            <person name="Freyermuth S.K."/>
            <person name="Harmer T.L."/>
            <person name="Hauser L.J."/>
            <person name="Huegler M."/>
            <person name="Kerfeld C.A."/>
            <person name="Klotz M.G."/>
            <person name="Kong W.W."/>
            <person name="Land M."/>
            <person name="Lapidus A."/>
            <person name="Larimer F.W."/>
            <person name="Longo D.L."/>
            <person name="Lucas S."/>
            <person name="Malfatti S.A."/>
            <person name="Massey S.E."/>
            <person name="Martin D.D."/>
            <person name="McCuddin Z."/>
            <person name="Meyer F."/>
            <person name="Moore J.L."/>
            <person name="Ocampo L.H. Jr."/>
            <person name="Paul J.H."/>
            <person name="Paulsen I.T."/>
            <person name="Reep D.K."/>
            <person name="Ren Q."/>
            <person name="Ross R.L."/>
            <person name="Sato P.Y."/>
            <person name="Thomas P."/>
            <person name="Tinkham L.E."/>
            <person name="Zeruth G.T."/>
        </authorList>
    </citation>
    <scope>NUCLEOTIDE SEQUENCE [LARGE SCALE GENOMIC DNA]</scope>
    <source>
        <strain>DSM 25203 / XCL-2</strain>
    </source>
</reference>
<gene>
    <name evidence="1" type="primary">dnaJ</name>
    <name type="ordered locus">Tcr_0871</name>
</gene>